<evidence type="ECO:0000255" key="1">
    <source>
        <dbReference type="HAMAP-Rule" id="MF_03154"/>
    </source>
</evidence>
<evidence type="ECO:0000256" key="2">
    <source>
        <dbReference type="SAM" id="MobiDB-lite"/>
    </source>
</evidence>
<comment type="function">
    <text evidence="1">Catalyzes 2 different reactions between oxygen and the acireductone 1,2-dihydroxy-3-keto-5-methylthiopentene (DHK-MTPene) depending upon the metal bound in the active site. Fe-containing acireductone dioxygenase (Fe-ARD) produces formate and 2-keto-4-methylthiobutyrate (KMTB), the alpha-ketoacid precursor of methionine in the methionine recycle pathway. Ni-containing acireductone dioxygenase (Ni-ARD) produces methylthiopropionate, carbon monoxide and formate, and does not lie on the methionine recycle pathway.</text>
</comment>
<comment type="catalytic activity">
    <reaction evidence="1">
        <text>1,2-dihydroxy-5-(methylsulfanyl)pent-1-en-3-one + O2 = 4-methylsulfanyl-2-oxobutanoate + formate + 2 H(+)</text>
        <dbReference type="Rhea" id="RHEA:24504"/>
        <dbReference type="ChEBI" id="CHEBI:15378"/>
        <dbReference type="ChEBI" id="CHEBI:15379"/>
        <dbReference type="ChEBI" id="CHEBI:15740"/>
        <dbReference type="ChEBI" id="CHEBI:16723"/>
        <dbReference type="ChEBI" id="CHEBI:49252"/>
        <dbReference type="EC" id="1.13.11.54"/>
    </reaction>
</comment>
<comment type="catalytic activity">
    <reaction evidence="1">
        <text>1,2-dihydroxy-5-(methylsulfanyl)pent-1-en-3-one + O2 = 3-(methylsulfanyl)propanoate + CO + formate + 2 H(+)</text>
        <dbReference type="Rhea" id="RHEA:14161"/>
        <dbReference type="ChEBI" id="CHEBI:15378"/>
        <dbReference type="ChEBI" id="CHEBI:15379"/>
        <dbReference type="ChEBI" id="CHEBI:15740"/>
        <dbReference type="ChEBI" id="CHEBI:17245"/>
        <dbReference type="ChEBI" id="CHEBI:49016"/>
        <dbReference type="ChEBI" id="CHEBI:49252"/>
        <dbReference type="EC" id="1.13.11.53"/>
    </reaction>
</comment>
<comment type="cofactor">
    <cofactor evidence="1">
        <name>Fe(2+)</name>
        <dbReference type="ChEBI" id="CHEBI:29033"/>
    </cofactor>
    <cofactor evidence="1">
        <name>Ni(2+)</name>
        <dbReference type="ChEBI" id="CHEBI:49786"/>
    </cofactor>
    <text evidence="1">Binds either 1 Fe or Ni cation per monomer. Iron-binding promotes an acireductone dioxygenase reaction producing 2-keto-4-methylthiobutyrate, while nickel-binding promotes an acireductone dioxygenase reaction producing 3-(methylsulfanyl)propanoate.</text>
</comment>
<comment type="pathway">
    <text evidence="1">Amino-acid biosynthesis; L-methionine biosynthesis via salvage pathway; L-methionine from S-methyl-5-thio-alpha-D-ribose 1-phosphate: step 5/6.</text>
</comment>
<comment type="subcellular location">
    <subcellularLocation>
        <location evidence="1">Cytoplasm</location>
    </subcellularLocation>
    <subcellularLocation>
        <location evidence="1">Nucleus</location>
    </subcellularLocation>
</comment>
<comment type="similarity">
    <text evidence="1">Belongs to the acireductone dioxygenase (ARD) family.</text>
</comment>
<keyword id="KW-0028">Amino-acid biosynthesis</keyword>
<keyword id="KW-0963">Cytoplasm</keyword>
<keyword id="KW-0223">Dioxygenase</keyword>
<keyword id="KW-0408">Iron</keyword>
<keyword id="KW-0479">Metal-binding</keyword>
<keyword id="KW-0486">Methionine biosynthesis</keyword>
<keyword id="KW-0533">Nickel</keyword>
<keyword id="KW-0539">Nucleus</keyword>
<keyword id="KW-0560">Oxidoreductase</keyword>
<keyword id="KW-1185">Reference proteome</keyword>
<dbReference type="EC" id="1.13.11.54" evidence="1"/>
<dbReference type="EC" id="1.13.11.53" evidence="1"/>
<dbReference type="EMBL" id="AACD01000234">
    <property type="protein sequence ID" value="EAA66733.1"/>
    <property type="molecule type" value="Genomic_DNA"/>
</dbReference>
<dbReference type="EMBL" id="AACD01000110">
    <property type="protein sequence ID" value="EAA58105.1"/>
    <property type="molecule type" value="Genomic_DNA"/>
</dbReference>
<dbReference type="EMBL" id="BN001301">
    <property type="protein sequence ID" value="CBF71021.1"/>
    <property type="molecule type" value="Genomic_DNA"/>
</dbReference>
<dbReference type="RefSeq" id="XP_664180.1">
    <property type="nucleotide sequence ID" value="XM_659088.1"/>
</dbReference>
<dbReference type="RefSeq" id="XP_868909.1">
    <property type="nucleotide sequence ID" value="XM_863816.1"/>
</dbReference>
<dbReference type="SMR" id="Q5AQA3"/>
<dbReference type="FunCoup" id="Q5AQA3">
    <property type="interactions" value="266"/>
</dbReference>
<dbReference type="STRING" id="227321.Q5AQA3"/>
<dbReference type="EnsemblFungi" id="CBF71021">
    <property type="protein sequence ID" value="CBF71021"/>
    <property type="gene ID" value="ANIA_06576"/>
</dbReference>
<dbReference type="KEGG" id="ani:ANIA_06576"/>
<dbReference type="VEuPathDB" id="FungiDB:AN6576"/>
<dbReference type="eggNOG" id="KOG2107">
    <property type="taxonomic scope" value="Eukaryota"/>
</dbReference>
<dbReference type="HOGENOM" id="CLU_090154_1_0_1"/>
<dbReference type="InParanoid" id="Q5AQA3"/>
<dbReference type="OMA" id="WYMDESQ"/>
<dbReference type="OrthoDB" id="1867259at2759"/>
<dbReference type="UniPathway" id="UPA00904">
    <property type="reaction ID" value="UER00878"/>
</dbReference>
<dbReference type="Proteomes" id="UP000000560">
    <property type="component" value="Chromosome I"/>
</dbReference>
<dbReference type="GO" id="GO:0005737">
    <property type="term" value="C:cytoplasm"/>
    <property type="evidence" value="ECO:0007669"/>
    <property type="project" value="UniProtKB-SubCell"/>
</dbReference>
<dbReference type="GO" id="GO:0005634">
    <property type="term" value="C:nucleus"/>
    <property type="evidence" value="ECO:0007669"/>
    <property type="project" value="UniProtKB-SubCell"/>
</dbReference>
<dbReference type="GO" id="GO:0010308">
    <property type="term" value="F:acireductone dioxygenase (Ni2+-requiring) activity"/>
    <property type="evidence" value="ECO:0007669"/>
    <property type="project" value="UniProtKB-UniRule"/>
</dbReference>
<dbReference type="GO" id="GO:0010309">
    <property type="term" value="F:acireductone dioxygenase [iron(II)-requiring] activity"/>
    <property type="evidence" value="ECO:0000318"/>
    <property type="project" value="GO_Central"/>
</dbReference>
<dbReference type="GO" id="GO:0005506">
    <property type="term" value="F:iron ion binding"/>
    <property type="evidence" value="ECO:0007669"/>
    <property type="project" value="UniProtKB-UniRule"/>
</dbReference>
<dbReference type="GO" id="GO:0016151">
    <property type="term" value="F:nickel cation binding"/>
    <property type="evidence" value="ECO:0007669"/>
    <property type="project" value="UniProtKB-UniRule"/>
</dbReference>
<dbReference type="GO" id="GO:0019509">
    <property type="term" value="P:L-methionine salvage from methylthioadenosine"/>
    <property type="evidence" value="ECO:0007669"/>
    <property type="project" value="UniProtKB-UniRule"/>
</dbReference>
<dbReference type="GO" id="GO:0006555">
    <property type="term" value="P:methionine metabolic process"/>
    <property type="evidence" value="ECO:0000318"/>
    <property type="project" value="GO_Central"/>
</dbReference>
<dbReference type="CDD" id="cd02232">
    <property type="entry name" value="cupin_ARD"/>
    <property type="match status" value="1"/>
</dbReference>
<dbReference type="FunFam" id="2.60.120.10:FF:000079">
    <property type="entry name" value="1,2-dihydroxy-3-keto-5-methylthiopentene dioxygenase"/>
    <property type="match status" value="1"/>
</dbReference>
<dbReference type="Gene3D" id="2.60.120.10">
    <property type="entry name" value="Jelly Rolls"/>
    <property type="match status" value="1"/>
</dbReference>
<dbReference type="HAMAP" id="MF_03154">
    <property type="entry name" value="Salvage_MtnD_euk"/>
    <property type="match status" value="1"/>
</dbReference>
<dbReference type="InterPro" id="IPR004313">
    <property type="entry name" value="ARD"/>
</dbReference>
<dbReference type="InterPro" id="IPR027496">
    <property type="entry name" value="ARD_euk"/>
</dbReference>
<dbReference type="InterPro" id="IPR014710">
    <property type="entry name" value="RmlC-like_jellyroll"/>
</dbReference>
<dbReference type="InterPro" id="IPR011051">
    <property type="entry name" value="RmlC_Cupin_sf"/>
</dbReference>
<dbReference type="PANTHER" id="PTHR23418">
    <property type="entry name" value="ACIREDUCTONE DIOXYGENASE"/>
    <property type="match status" value="1"/>
</dbReference>
<dbReference type="PANTHER" id="PTHR23418:SF0">
    <property type="entry name" value="ACIREDUCTONE DIOXYGENASE"/>
    <property type="match status" value="1"/>
</dbReference>
<dbReference type="Pfam" id="PF03079">
    <property type="entry name" value="ARD"/>
    <property type="match status" value="1"/>
</dbReference>
<dbReference type="SUPFAM" id="SSF51182">
    <property type="entry name" value="RmlC-like cupins"/>
    <property type="match status" value="1"/>
</dbReference>
<feature type="chain" id="PRO_0000414358" description="Acireductone dioxygenase">
    <location>
        <begin position="1"/>
        <end position="178"/>
    </location>
</feature>
<feature type="region of interest" description="Disordered" evidence="2">
    <location>
        <begin position="1"/>
        <end position="22"/>
    </location>
</feature>
<feature type="compositionally biased region" description="Basic and acidic residues" evidence="2">
    <location>
        <begin position="9"/>
        <end position="22"/>
    </location>
</feature>
<feature type="binding site" evidence="1">
    <location>
        <position position="81"/>
    </location>
    <ligand>
        <name>Fe(2+)</name>
        <dbReference type="ChEBI" id="CHEBI:29033"/>
        <note>for iron-dependent acireductone dioxygenase activity</note>
    </ligand>
</feature>
<feature type="binding site" evidence="1">
    <location>
        <position position="81"/>
    </location>
    <ligand>
        <name>Ni(2+)</name>
        <dbReference type="ChEBI" id="CHEBI:49786"/>
        <note>for nickel-dependent acireductone dioxygenase activity</note>
    </ligand>
</feature>
<feature type="binding site" evidence="1">
    <location>
        <position position="83"/>
    </location>
    <ligand>
        <name>Fe(2+)</name>
        <dbReference type="ChEBI" id="CHEBI:29033"/>
        <note>for iron-dependent acireductone dioxygenase activity</note>
    </ligand>
</feature>
<feature type="binding site" evidence="1">
    <location>
        <position position="83"/>
    </location>
    <ligand>
        <name>Ni(2+)</name>
        <dbReference type="ChEBI" id="CHEBI:49786"/>
        <note>for nickel-dependent acireductone dioxygenase activity</note>
    </ligand>
</feature>
<feature type="binding site" evidence="1">
    <location>
        <position position="87"/>
    </location>
    <ligand>
        <name>Fe(2+)</name>
        <dbReference type="ChEBI" id="CHEBI:29033"/>
        <note>for iron-dependent acireductone dioxygenase activity</note>
    </ligand>
</feature>
<feature type="binding site" evidence="1">
    <location>
        <position position="87"/>
    </location>
    <ligand>
        <name>Ni(2+)</name>
        <dbReference type="ChEBI" id="CHEBI:49786"/>
        <note>for nickel-dependent acireductone dioxygenase activity</note>
    </ligand>
</feature>
<feature type="binding site" evidence="1">
    <location>
        <position position="126"/>
    </location>
    <ligand>
        <name>Fe(2+)</name>
        <dbReference type="ChEBI" id="CHEBI:29033"/>
        <note>for iron-dependent acireductone dioxygenase activity</note>
    </ligand>
</feature>
<feature type="binding site" evidence="1">
    <location>
        <position position="126"/>
    </location>
    <ligand>
        <name>Ni(2+)</name>
        <dbReference type="ChEBI" id="CHEBI:49786"/>
        <note>for nickel-dependent acireductone dioxygenase activity</note>
    </ligand>
</feature>
<accession>Q5AQA3</accession>
<accession>C8V0W1</accession>
<sequence length="178" mass="20886">MKAYWYDNKPGDQREPHDSGRPVSEDYLASLGVIYRHFPELSDVDALAKERGYKNRDEITVSPATMGEAYEDKVKMFFAEHLHEDEEIRYIRDGEGYFDVRGKEDEWVRIRLVKDDLIILPAGIYHRFTTDNKNYIKAMRLFQEEPKWTPLNRAPELDENQHRKSYLEGLTATSIAAN</sequence>
<gene>
    <name type="primary">adi1</name>
    <name type="ORF">AN6576</name>
</gene>
<reference key="1">
    <citation type="journal article" date="2005" name="Nature">
        <title>Sequencing of Aspergillus nidulans and comparative analysis with A. fumigatus and A. oryzae.</title>
        <authorList>
            <person name="Galagan J.E."/>
            <person name="Calvo S.E."/>
            <person name="Cuomo C."/>
            <person name="Ma L.-J."/>
            <person name="Wortman J.R."/>
            <person name="Batzoglou S."/>
            <person name="Lee S.-I."/>
            <person name="Bastuerkmen M."/>
            <person name="Spevak C.C."/>
            <person name="Clutterbuck J."/>
            <person name="Kapitonov V."/>
            <person name="Jurka J."/>
            <person name="Scazzocchio C."/>
            <person name="Farman M.L."/>
            <person name="Butler J."/>
            <person name="Purcell S."/>
            <person name="Harris S."/>
            <person name="Braus G.H."/>
            <person name="Draht O."/>
            <person name="Busch S."/>
            <person name="D'Enfert C."/>
            <person name="Bouchier C."/>
            <person name="Goldman G.H."/>
            <person name="Bell-Pedersen D."/>
            <person name="Griffiths-Jones S."/>
            <person name="Doonan J.H."/>
            <person name="Yu J."/>
            <person name="Vienken K."/>
            <person name="Pain A."/>
            <person name="Freitag M."/>
            <person name="Selker E.U."/>
            <person name="Archer D.B."/>
            <person name="Penalva M.A."/>
            <person name="Oakley B.R."/>
            <person name="Momany M."/>
            <person name="Tanaka T."/>
            <person name="Kumagai T."/>
            <person name="Asai K."/>
            <person name="Machida M."/>
            <person name="Nierman W.C."/>
            <person name="Denning D.W."/>
            <person name="Caddick M.X."/>
            <person name="Hynes M."/>
            <person name="Paoletti M."/>
            <person name="Fischer R."/>
            <person name="Miller B.L."/>
            <person name="Dyer P.S."/>
            <person name="Sachs M.S."/>
            <person name="Osmani S.A."/>
            <person name="Birren B.W."/>
        </authorList>
    </citation>
    <scope>NUCLEOTIDE SEQUENCE [LARGE SCALE GENOMIC DNA]</scope>
    <source>
        <strain>FGSC A4 / ATCC 38163 / CBS 112.46 / NRRL 194 / M139</strain>
    </source>
</reference>
<reference key="2">
    <citation type="journal article" date="2009" name="Fungal Genet. Biol.">
        <title>The 2008 update of the Aspergillus nidulans genome annotation: a community effort.</title>
        <authorList>
            <person name="Wortman J.R."/>
            <person name="Gilsenan J.M."/>
            <person name="Joardar V."/>
            <person name="Deegan J."/>
            <person name="Clutterbuck J."/>
            <person name="Andersen M.R."/>
            <person name="Archer D."/>
            <person name="Bencina M."/>
            <person name="Braus G."/>
            <person name="Coutinho P."/>
            <person name="von Dohren H."/>
            <person name="Doonan J."/>
            <person name="Driessen A.J."/>
            <person name="Durek P."/>
            <person name="Espeso E."/>
            <person name="Fekete E."/>
            <person name="Flipphi M."/>
            <person name="Estrada C.G."/>
            <person name="Geysens S."/>
            <person name="Goldman G."/>
            <person name="de Groot P.W."/>
            <person name="Hansen K."/>
            <person name="Harris S.D."/>
            <person name="Heinekamp T."/>
            <person name="Helmstaedt K."/>
            <person name="Henrissat B."/>
            <person name="Hofmann G."/>
            <person name="Homan T."/>
            <person name="Horio T."/>
            <person name="Horiuchi H."/>
            <person name="James S."/>
            <person name="Jones M."/>
            <person name="Karaffa L."/>
            <person name="Karanyi Z."/>
            <person name="Kato M."/>
            <person name="Keller N."/>
            <person name="Kelly D.E."/>
            <person name="Kiel J.A."/>
            <person name="Kim J.M."/>
            <person name="van der Klei I.J."/>
            <person name="Klis F.M."/>
            <person name="Kovalchuk A."/>
            <person name="Krasevec N."/>
            <person name="Kubicek C.P."/>
            <person name="Liu B."/>
            <person name="Maccabe A."/>
            <person name="Meyer V."/>
            <person name="Mirabito P."/>
            <person name="Miskei M."/>
            <person name="Mos M."/>
            <person name="Mullins J."/>
            <person name="Nelson D.R."/>
            <person name="Nielsen J."/>
            <person name="Oakley B.R."/>
            <person name="Osmani S.A."/>
            <person name="Pakula T."/>
            <person name="Paszewski A."/>
            <person name="Paulsen I."/>
            <person name="Pilsyk S."/>
            <person name="Pocsi I."/>
            <person name="Punt P.J."/>
            <person name="Ram A.F."/>
            <person name="Ren Q."/>
            <person name="Robellet X."/>
            <person name="Robson G."/>
            <person name="Seiboth B."/>
            <person name="van Solingen P."/>
            <person name="Specht T."/>
            <person name="Sun J."/>
            <person name="Taheri-Talesh N."/>
            <person name="Takeshita N."/>
            <person name="Ussery D."/>
            <person name="vanKuyk P.A."/>
            <person name="Visser H."/>
            <person name="van de Vondervoort P.J."/>
            <person name="de Vries R.P."/>
            <person name="Walton J."/>
            <person name="Xiang X."/>
            <person name="Xiong Y."/>
            <person name="Zeng A.P."/>
            <person name="Brandt B.W."/>
            <person name="Cornell M.J."/>
            <person name="van den Hondel C.A."/>
            <person name="Visser J."/>
            <person name="Oliver S.G."/>
            <person name="Turner G."/>
        </authorList>
    </citation>
    <scope>GENOME REANNOTATION</scope>
    <source>
        <strain>FGSC A4 / ATCC 38163 / CBS 112.46 / NRRL 194 / M139</strain>
    </source>
</reference>
<proteinExistence type="inferred from homology"/>
<protein>
    <recommendedName>
        <fullName evidence="1">Acireductone dioxygenase</fullName>
    </recommendedName>
    <alternativeName>
        <fullName evidence="1">Acireductone dioxygenase (Fe(2+)-requiring)</fullName>
        <shortName evidence="1">ARD'</shortName>
        <shortName evidence="1">Fe-ARD</shortName>
        <ecNumber evidence="1">1.13.11.54</ecNumber>
    </alternativeName>
    <alternativeName>
        <fullName evidence="1">Acireductone dioxygenase (Ni(2+)-requiring)</fullName>
        <shortName evidence="1">ARD</shortName>
        <shortName evidence="1">Ni-ARD</shortName>
        <ecNumber evidence="1">1.13.11.53</ecNumber>
    </alternativeName>
</protein>
<organism>
    <name type="scientific">Emericella nidulans (strain FGSC A4 / ATCC 38163 / CBS 112.46 / NRRL 194 / M139)</name>
    <name type="common">Aspergillus nidulans</name>
    <dbReference type="NCBI Taxonomy" id="227321"/>
    <lineage>
        <taxon>Eukaryota</taxon>
        <taxon>Fungi</taxon>
        <taxon>Dikarya</taxon>
        <taxon>Ascomycota</taxon>
        <taxon>Pezizomycotina</taxon>
        <taxon>Eurotiomycetes</taxon>
        <taxon>Eurotiomycetidae</taxon>
        <taxon>Eurotiales</taxon>
        <taxon>Aspergillaceae</taxon>
        <taxon>Aspergillus</taxon>
        <taxon>Aspergillus subgen. Nidulantes</taxon>
    </lineage>
</organism>
<name>MTND_EMENI</name>